<feature type="chain" id="PRO_0000060131" description="Octopine transport system permease protein OccQ">
    <location>
        <begin position="1"/>
        <end position="237"/>
    </location>
</feature>
<feature type="transmembrane region" description="Helical" evidence="2">
    <location>
        <begin position="26"/>
        <end position="46"/>
    </location>
</feature>
<feature type="transmembrane region" description="Helical" evidence="2">
    <location>
        <begin position="72"/>
        <end position="92"/>
    </location>
</feature>
<feature type="transmembrane region" description="Helical" evidence="2">
    <location>
        <begin position="96"/>
        <end position="116"/>
    </location>
</feature>
<feature type="transmembrane region" description="Helical" evidence="2">
    <location>
        <begin position="202"/>
        <end position="222"/>
    </location>
</feature>
<feature type="domain" description="ABC transmembrane type-1" evidence="2">
    <location>
        <begin position="22"/>
        <end position="222"/>
    </location>
</feature>
<keyword id="KW-0997">Cell inner membrane</keyword>
<keyword id="KW-1003">Cell membrane</keyword>
<keyword id="KW-0472">Membrane</keyword>
<keyword id="KW-0614">Plasmid</keyword>
<keyword id="KW-0812">Transmembrane</keyword>
<keyword id="KW-1133">Transmembrane helix</keyword>
<keyword id="KW-0813">Transport</keyword>
<reference key="1">
    <citation type="book" date="1992" name="Guanidino compounds in biology and medicine">
        <title>Catabolism of the guanidino compounds nopaline, octopine, and L-arginine in Agrobacterium tumefaciens: enzymes, genes, and regulation.</title>
        <editorList>
            <person name="De Deyn P.P."/>
            <person name="Marescau B."/>
            <person name="Stalon V."/>
            <person name="Qureshi I.A."/>
        </editorList>
        <authorList>
            <person name="Schroeder J."/>
            <person name="von Lintig J."/>
            <person name="Zanker H."/>
        </authorList>
    </citation>
    <scope>NUCLEOTIDE SEQUENCE [GENOMIC DNA]</scope>
</reference>
<dbReference type="EMBL" id="Z30328">
    <property type="protein sequence ID" value="CAA82983.1"/>
    <property type="molecule type" value="Genomic_DNA"/>
</dbReference>
<dbReference type="RefSeq" id="NP_059714.1">
    <property type="nucleotide sequence ID" value="NC_002377.1"/>
</dbReference>
<dbReference type="SMR" id="P0A4N6"/>
<dbReference type="GO" id="GO:0043190">
    <property type="term" value="C:ATP-binding cassette (ABC) transporter complex"/>
    <property type="evidence" value="ECO:0007669"/>
    <property type="project" value="InterPro"/>
</dbReference>
<dbReference type="GO" id="GO:0022857">
    <property type="term" value="F:transmembrane transporter activity"/>
    <property type="evidence" value="ECO:0007669"/>
    <property type="project" value="InterPro"/>
</dbReference>
<dbReference type="CDD" id="cd06261">
    <property type="entry name" value="TM_PBP2"/>
    <property type="match status" value="1"/>
</dbReference>
<dbReference type="Gene3D" id="1.10.3720.10">
    <property type="entry name" value="MetI-like"/>
    <property type="match status" value="1"/>
</dbReference>
<dbReference type="InterPro" id="IPR010065">
    <property type="entry name" value="AA_ABC_transptr_permease_3TM"/>
</dbReference>
<dbReference type="InterPro" id="IPR051613">
    <property type="entry name" value="ABC_transp_permease_HisMQ"/>
</dbReference>
<dbReference type="InterPro" id="IPR000515">
    <property type="entry name" value="MetI-like"/>
</dbReference>
<dbReference type="InterPro" id="IPR035906">
    <property type="entry name" value="MetI-like_sf"/>
</dbReference>
<dbReference type="NCBIfam" id="TIGR01726">
    <property type="entry name" value="HEQRo_perm_3TM"/>
    <property type="match status" value="1"/>
</dbReference>
<dbReference type="PANTHER" id="PTHR30133:SF2">
    <property type="entry name" value="ARGININE ABC TRANSPORTER PERMEASE PROTEIN ARTQ"/>
    <property type="match status" value="1"/>
</dbReference>
<dbReference type="PANTHER" id="PTHR30133">
    <property type="entry name" value="CATIONIC AMINO ACID TRANSPORTER, MEMBRANE COMPONENT"/>
    <property type="match status" value="1"/>
</dbReference>
<dbReference type="Pfam" id="PF00528">
    <property type="entry name" value="BPD_transp_1"/>
    <property type="match status" value="1"/>
</dbReference>
<dbReference type="SUPFAM" id="SSF161098">
    <property type="entry name" value="MetI-like"/>
    <property type="match status" value="1"/>
</dbReference>
<dbReference type="PROSITE" id="PS50928">
    <property type="entry name" value="ABC_TM1"/>
    <property type="match status" value="1"/>
</dbReference>
<gene>
    <name type="primary">occQ</name>
</gene>
<sequence>MDYSQLMGFGPDGWGYDMLRATAMTMAVAFSGFTIGLVFGCLGAAASLSSSGALQAAASGYTTALRGIPDLLVIYLFYFGSSSVISNVASLFGSSGFVGASTFLIGALAIGVVSGAYQTQVLRGAVLALNKGEIEAGRAYGMGALLLFRRIVLPQAARYALPGVGNVWQLVLKESALISVIGLVELMRQAQVGSGSTRQPFSFYLTAAALYLLITFVSGQVFRLAETRSMRGLQRGV</sequence>
<name>OCCQ_AGRT4</name>
<organism>
    <name type="scientific">Agrobacterium tumefaciens (strain Ach5)</name>
    <dbReference type="NCBI Taxonomy" id="176298"/>
    <lineage>
        <taxon>Bacteria</taxon>
        <taxon>Pseudomonadati</taxon>
        <taxon>Pseudomonadota</taxon>
        <taxon>Alphaproteobacteria</taxon>
        <taxon>Hyphomicrobiales</taxon>
        <taxon>Rhizobiaceae</taxon>
        <taxon>Rhizobium/Agrobacterium group</taxon>
        <taxon>Agrobacterium</taxon>
        <taxon>Agrobacterium tumefaciens complex</taxon>
    </lineage>
</organism>
<protein>
    <recommendedName>
        <fullName>Octopine transport system permease protein OccQ</fullName>
    </recommendedName>
</protein>
<evidence type="ECO:0000250" key="1"/>
<evidence type="ECO:0000255" key="2">
    <source>
        <dbReference type="PROSITE-ProRule" id="PRU00441"/>
    </source>
</evidence>
<evidence type="ECO:0000305" key="3"/>
<comment type="function">
    <text evidence="1">Component of the octopine active transport system probably consisting of four subunits: Q, M, P and T.</text>
</comment>
<comment type="subcellular location">
    <subcellularLocation>
        <location evidence="1">Cell inner membrane</location>
        <topology evidence="2">Multi-pass membrane protein</topology>
    </subcellularLocation>
</comment>
<comment type="induction">
    <text evidence="1">By octopine.</text>
</comment>
<comment type="similarity">
    <text evidence="3">Belongs to the binding-protein-dependent transport system permease family. HisMQ subfamily.</text>
</comment>
<proteinExistence type="inferred from homology"/>
<accession>P0A4N6</accession>
<accession>P35119</accession>
<geneLocation type="plasmid">
    <name>pTiAch5</name>
</geneLocation>